<accession>Q4V7A5</accession>
<protein>
    <recommendedName>
        <fullName>Uncharacterized protein C11orf24 homolog</fullName>
    </recommendedName>
</protein>
<name>CK024_RAT</name>
<comment type="subcellular location">
    <subcellularLocation>
        <location evidence="1">Cell membrane</location>
        <topology evidence="1">Single-pass type I membrane protein</topology>
    </subcellularLocation>
    <subcellularLocation>
        <location evidence="1">Golgi apparatus</location>
        <location evidence="1">trans-Golgi network membrane</location>
        <topology evidence="1">Single-pass type I membrane protein</topology>
    </subcellularLocation>
    <text evidence="1">Cycles to the plasma membrane via endosomes in a pH sensitive manner. Associated with Rab6-positive vesicles (By similarity).</text>
</comment>
<evidence type="ECO:0000250" key="1"/>
<evidence type="ECO:0000255" key="2"/>
<evidence type="ECO:0000256" key="3">
    <source>
        <dbReference type="SAM" id="MobiDB-lite"/>
    </source>
</evidence>
<proteinExistence type="evidence at transcript level"/>
<dbReference type="EMBL" id="BC098053">
    <property type="protein sequence ID" value="AAH98053.1"/>
    <property type="molecule type" value="mRNA"/>
</dbReference>
<dbReference type="RefSeq" id="NP_001020854.1">
    <property type="nucleotide sequence ID" value="NM_001025683.2"/>
</dbReference>
<dbReference type="SMR" id="Q4V7A5"/>
<dbReference type="FunCoup" id="Q4V7A5">
    <property type="interactions" value="25"/>
</dbReference>
<dbReference type="STRING" id="10116.ENSRNOP00000037591"/>
<dbReference type="GlyGen" id="Q4V7A5">
    <property type="glycosylation" value="10 sites"/>
</dbReference>
<dbReference type="PhosphoSitePlus" id="Q4V7A5"/>
<dbReference type="PaxDb" id="10116-ENSRNOP00000037591"/>
<dbReference type="Ensembl" id="ENSRNOT00000034240.6">
    <property type="protein sequence ID" value="ENSRNOP00000037591.4"/>
    <property type="gene ID" value="ENSRNOG00000025245.6"/>
</dbReference>
<dbReference type="GeneID" id="309145"/>
<dbReference type="KEGG" id="rno:309145"/>
<dbReference type="UCSC" id="RGD:1311946">
    <property type="organism name" value="rat"/>
</dbReference>
<dbReference type="AGR" id="RGD:1311946"/>
<dbReference type="CTD" id="309145"/>
<dbReference type="RGD" id="1311946">
    <property type="gene designation" value="C1h11orf24"/>
</dbReference>
<dbReference type="eggNOG" id="ENOG502RZBP">
    <property type="taxonomic scope" value="Eukaryota"/>
</dbReference>
<dbReference type="GeneTree" id="ENSGT00940000153377"/>
<dbReference type="HOGENOM" id="CLU_056955_0_0_1"/>
<dbReference type="InParanoid" id="Q4V7A5"/>
<dbReference type="OMA" id="PEMEAMS"/>
<dbReference type="OrthoDB" id="10071013at2759"/>
<dbReference type="PhylomeDB" id="Q4V7A5"/>
<dbReference type="TreeFam" id="TF336966"/>
<dbReference type="PRO" id="PR:Q4V7A5"/>
<dbReference type="Proteomes" id="UP000002494">
    <property type="component" value="Chromosome 1"/>
</dbReference>
<dbReference type="Bgee" id="ENSRNOG00000025245">
    <property type="expression patterns" value="Expressed in duodenum and 21 other cell types or tissues"/>
</dbReference>
<dbReference type="GO" id="GO:0005794">
    <property type="term" value="C:Golgi apparatus"/>
    <property type="evidence" value="ECO:0000318"/>
    <property type="project" value="GO_Central"/>
</dbReference>
<dbReference type="GO" id="GO:0005886">
    <property type="term" value="C:plasma membrane"/>
    <property type="evidence" value="ECO:0007669"/>
    <property type="project" value="UniProtKB-SubCell"/>
</dbReference>
<dbReference type="InterPro" id="IPR041056">
    <property type="entry name" value="DUF5585"/>
</dbReference>
<dbReference type="InterPro" id="IPR052660">
    <property type="entry name" value="Erythrocyte_Invasion_ImmMod"/>
</dbReference>
<dbReference type="PANTHER" id="PTHR16021:SF9">
    <property type="entry name" value="CHROMOSOME 11 OPEN READING FRAME 24"/>
    <property type="match status" value="1"/>
</dbReference>
<dbReference type="PANTHER" id="PTHR16021">
    <property type="entry name" value="MANSC DOMAIN CONTAINING PROTEIN 1"/>
    <property type="match status" value="1"/>
</dbReference>
<dbReference type="Pfam" id="PF17823">
    <property type="entry name" value="DUF5585"/>
    <property type="match status" value="1"/>
</dbReference>
<organism>
    <name type="scientific">Rattus norvegicus</name>
    <name type="common">Rat</name>
    <dbReference type="NCBI Taxonomy" id="10116"/>
    <lineage>
        <taxon>Eukaryota</taxon>
        <taxon>Metazoa</taxon>
        <taxon>Chordata</taxon>
        <taxon>Craniata</taxon>
        <taxon>Vertebrata</taxon>
        <taxon>Euteleostomi</taxon>
        <taxon>Mammalia</taxon>
        <taxon>Eutheria</taxon>
        <taxon>Euarchontoglires</taxon>
        <taxon>Glires</taxon>
        <taxon>Rodentia</taxon>
        <taxon>Myomorpha</taxon>
        <taxon>Muroidea</taxon>
        <taxon>Muridae</taxon>
        <taxon>Murinae</taxon>
        <taxon>Rattus</taxon>
    </lineage>
</organism>
<reference key="1">
    <citation type="journal article" date="2004" name="Genome Res.">
        <title>The status, quality, and expansion of the NIH full-length cDNA project: the Mammalian Gene Collection (MGC).</title>
        <authorList>
            <consortium name="The MGC Project Team"/>
        </authorList>
    </citation>
    <scope>NUCLEOTIDE SEQUENCE [LARGE SCALE MRNA]</scope>
    <source>
        <tissue>Testis</tissue>
    </source>
</reference>
<feature type="signal peptide" evidence="2">
    <location>
        <begin position="1"/>
        <end position="18"/>
    </location>
</feature>
<feature type="chain" id="PRO_0000251889" description="Uncharacterized protein C11orf24 homolog">
    <location>
        <begin position="19"/>
        <end position="477"/>
    </location>
</feature>
<feature type="topological domain" description="Extracellular" evidence="2">
    <location>
        <begin position="19"/>
        <end position="427"/>
    </location>
</feature>
<feature type="transmembrane region" description="Helical" evidence="2">
    <location>
        <begin position="428"/>
        <end position="448"/>
    </location>
</feature>
<feature type="topological domain" description="Cytoplasmic" evidence="2">
    <location>
        <begin position="449"/>
        <end position="477"/>
    </location>
</feature>
<feature type="region of interest" description="Disordered" evidence="3">
    <location>
        <begin position="79"/>
        <end position="103"/>
    </location>
</feature>
<feature type="region of interest" description="Disordered" evidence="3">
    <location>
        <begin position="239"/>
        <end position="366"/>
    </location>
</feature>
<feature type="region of interest" description="Disordered" evidence="3">
    <location>
        <begin position="378"/>
        <end position="398"/>
    </location>
</feature>
<feature type="compositionally biased region" description="Low complexity" evidence="3">
    <location>
        <begin position="85"/>
        <end position="97"/>
    </location>
</feature>
<feature type="compositionally biased region" description="Polar residues" evidence="3">
    <location>
        <begin position="253"/>
        <end position="288"/>
    </location>
</feature>
<feature type="compositionally biased region" description="Polar residues" evidence="3">
    <location>
        <begin position="298"/>
        <end position="309"/>
    </location>
</feature>
<feature type="compositionally biased region" description="Low complexity" evidence="3">
    <location>
        <begin position="310"/>
        <end position="326"/>
    </location>
</feature>
<feature type="compositionally biased region" description="Low complexity" evidence="3">
    <location>
        <begin position="348"/>
        <end position="361"/>
    </location>
</feature>
<feature type="compositionally biased region" description="Low complexity" evidence="3">
    <location>
        <begin position="378"/>
        <end position="393"/>
    </location>
</feature>
<feature type="glycosylation site" description="N-linked (GlcNAc...) asparagine" evidence="2">
    <location>
        <position position="40"/>
    </location>
</feature>
<feature type="glycosylation site" description="N-linked (GlcNAc...) asparagine" evidence="2">
    <location>
        <position position="51"/>
    </location>
</feature>
<feature type="glycosylation site" description="N-linked (GlcNAc...) asparagine" evidence="2">
    <location>
        <position position="77"/>
    </location>
</feature>
<feature type="glycosylation site" description="N-linked (GlcNAc...) asparagine" evidence="2">
    <location>
        <position position="300"/>
    </location>
</feature>
<sequence length="477" mass="48211">MWTALVLVWISSVPLSRSHTVPAVPRHLVTNKWPRAGKQNLSGDAVPRADNTSTLRAATVPPAPVTLTTGTWAATLNSTRVTAETTPHGTNTSTPTTREGTADSVTSRILAAPTSSSPSSVRQTLPTTIAGLPSLSTPRAEVPRTNASVSPRTAIATTVAPHTGTPTTGTVTAVSTVTPASGTVTAAVGTVTPAAGTVTAAVGTVTPAAGTVTAAVGTVTPAAVGTVTAAVGTVTSAAGTINTSDPHARTLSPAKSTPTNTSSRNPIPTSGAQTQGTTIQVTTDQPVHSTAGRPTPSPSNTTLEPNTPKSVASTSSAVVTTTQVQTKEPSASTVPVLPTSMSPEVEATSPTTQPSPLLPTQGTGGPGILLTTEQVGTKATAGTASAGPTSRSSGDVKVPTTASCQLSTQGQYLVVTTDPLTPSLVNKMFLLVVLIVGVTLFIAVLMMFALQAYESYKKKDYTQVDYLINGMYADSEM</sequence>
<keyword id="KW-1003">Cell membrane</keyword>
<keyword id="KW-0325">Glycoprotein</keyword>
<keyword id="KW-0333">Golgi apparatus</keyword>
<keyword id="KW-0472">Membrane</keyword>
<keyword id="KW-1185">Reference proteome</keyword>
<keyword id="KW-0732">Signal</keyword>
<keyword id="KW-0812">Transmembrane</keyword>
<keyword id="KW-1133">Transmembrane helix</keyword>